<gene>
    <name evidence="1" type="primary">argH</name>
    <name type="ordered locus">Ecok1_39340</name>
    <name type="ORF">APECO1_2507</name>
</gene>
<keyword id="KW-0028">Amino-acid biosynthesis</keyword>
<keyword id="KW-0055">Arginine biosynthesis</keyword>
<keyword id="KW-0963">Cytoplasm</keyword>
<keyword id="KW-0456">Lyase</keyword>
<keyword id="KW-1185">Reference proteome</keyword>
<name>ARLY_ECOK1</name>
<organism>
    <name type="scientific">Escherichia coli O1:K1 / APEC</name>
    <dbReference type="NCBI Taxonomy" id="405955"/>
    <lineage>
        <taxon>Bacteria</taxon>
        <taxon>Pseudomonadati</taxon>
        <taxon>Pseudomonadota</taxon>
        <taxon>Gammaproteobacteria</taxon>
        <taxon>Enterobacterales</taxon>
        <taxon>Enterobacteriaceae</taxon>
        <taxon>Escherichia</taxon>
    </lineage>
</organism>
<dbReference type="EC" id="4.3.2.1" evidence="1"/>
<dbReference type="EMBL" id="CP000468">
    <property type="protein sequence ID" value="ABJ03428.1"/>
    <property type="molecule type" value="Genomic_DNA"/>
</dbReference>
<dbReference type="RefSeq" id="WP_001230079.1">
    <property type="nucleotide sequence ID" value="NZ_CADILS010000014.1"/>
</dbReference>
<dbReference type="SMR" id="A1AID8"/>
<dbReference type="KEGG" id="ecv:APECO1_2507"/>
<dbReference type="HOGENOM" id="CLU_027272_2_3_6"/>
<dbReference type="UniPathway" id="UPA00068">
    <property type="reaction ID" value="UER00114"/>
</dbReference>
<dbReference type="Proteomes" id="UP000008216">
    <property type="component" value="Chromosome"/>
</dbReference>
<dbReference type="GO" id="GO:0005829">
    <property type="term" value="C:cytosol"/>
    <property type="evidence" value="ECO:0007669"/>
    <property type="project" value="TreeGrafter"/>
</dbReference>
<dbReference type="GO" id="GO:0004056">
    <property type="term" value="F:argininosuccinate lyase activity"/>
    <property type="evidence" value="ECO:0007669"/>
    <property type="project" value="UniProtKB-UniRule"/>
</dbReference>
<dbReference type="GO" id="GO:0042450">
    <property type="term" value="P:arginine biosynthetic process via ornithine"/>
    <property type="evidence" value="ECO:0007669"/>
    <property type="project" value="InterPro"/>
</dbReference>
<dbReference type="GO" id="GO:0006526">
    <property type="term" value="P:L-arginine biosynthetic process"/>
    <property type="evidence" value="ECO:0007669"/>
    <property type="project" value="UniProtKB-UniRule"/>
</dbReference>
<dbReference type="CDD" id="cd01359">
    <property type="entry name" value="Argininosuccinate_lyase"/>
    <property type="match status" value="1"/>
</dbReference>
<dbReference type="FunFam" id="1.10.275.10:FF:000004">
    <property type="entry name" value="Argininosuccinate lyase"/>
    <property type="match status" value="1"/>
</dbReference>
<dbReference type="FunFam" id="1.10.40.30:FF:000001">
    <property type="entry name" value="Argininosuccinate lyase"/>
    <property type="match status" value="1"/>
</dbReference>
<dbReference type="FunFam" id="1.20.200.10:FF:000006">
    <property type="entry name" value="Argininosuccinate lyase"/>
    <property type="match status" value="1"/>
</dbReference>
<dbReference type="Gene3D" id="1.10.40.30">
    <property type="entry name" value="Fumarase/aspartase (C-terminal domain)"/>
    <property type="match status" value="1"/>
</dbReference>
<dbReference type="Gene3D" id="1.20.200.10">
    <property type="entry name" value="Fumarase/aspartase (Central domain)"/>
    <property type="match status" value="1"/>
</dbReference>
<dbReference type="Gene3D" id="1.10.275.10">
    <property type="entry name" value="Fumarase/aspartase (N-terminal domain)"/>
    <property type="match status" value="1"/>
</dbReference>
<dbReference type="HAMAP" id="MF_00006">
    <property type="entry name" value="Arg_succ_lyase"/>
    <property type="match status" value="1"/>
</dbReference>
<dbReference type="InterPro" id="IPR029419">
    <property type="entry name" value="Arg_succ_lyase_C"/>
</dbReference>
<dbReference type="InterPro" id="IPR009049">
    <property type="entry name" value="Argininosuccinate_lyase"/>
</dbReference>
<dbReference type="InterPro" id="IPR024083">
    <property type="entry name" value="Fumarase/histidase_N"/>
</dbReference>
<dbReference type="InterPro" id="IPR020557">
    <property type="entry name" value="Fumarate_lyase_CS"/>
</dbReference>
<dbReference type="InterPro" id="IPR000362">
    <property type="entry name" value="Fumarate_lyase_fam"/>
</dbReference>
<dbReference type="InterPro" id="IPR022761">
    <property type="entry name" value="Fumarate_lyase_N"/>
</dbReference>
<dbReference type="InterPro" id="IPR008948">
    <property type="entry name" value="L-Aspartase-like"/>
</dbReference>
<dbReference type="NCBIfam" id="TIGR00838">
    <property type="entry name" value="argH"/>
    <property type="match status" value="1"/>
</dbReference>
<dbReference type="NCBIfam" id="NF008964">
    <property type="entry name" value="PRK12308.1"/>
    <property type="match status" value="1"/>
</dbReference>
<dbReference type="PANTHER" id="PTHR43814">
    <property type="entry name" value="ARGININOSUCCINATE LYASE"/>
    <property type="match status" value="1"/>
</dbReference>
<dbReference type="PANTHER" id="PTHR43814:SF1">
    <property type="entry name" value="ARGININOSUCCINATE LYASE"/>
    <property type="match status" value="1"/>
</dbReference>
<dbReference type="Pfam" id="PF14698">
    <property type="entry name" value="ASL_C2"/>
    <property type="match status" value="1"/>
</dbReference>
<dbReference type="Pfam" id="PF00206">
    <property type="entry name" value="Lyase_1"/>
    <property type="match status" value="1"/>
</dbReference>
<dbReference type="PRINTS" id="PR00145">
    <property type="entry name" value="ARGSUCLYASE"/>
</dbReference>
<dbReference type="PRINTS" id="PR00149">
    <property type="entry name" value="FUMRATELYASE"/>
</dbReference>
<dbReference type="SUPFAM" id="SSF48557">
    <property type="entry name" value="L-aspartase-like"/>
    <property type="match status" value="1"/>
</dbReference>
<dbReference type="PROSITE" id="PS00163">
    <property type="entry name" value="FUMARATE_LYASES"/>
    <property type="match status" value="1"/>
</dbReference>
<protein>
    <recommendedName>
        <fullName evidence="1">Argininosuccinate lyase</fullName>
        <shortName evidence="1">ASAL</shortName>
        <ecNumber evidence="1">4.3.2.1</ecNumber>
    </recommendedName>
    <alternativeName>
        <fullName evidence="1">Arginosuccinase</fullName>
    </alternativeName>
</protein>
<comment type="catalytic activity">
    <reaction evidence="1">
        <text>2-(N(omega)-L-arginino)succinate = fumarate + L-arginine</text>
        <dbReference type="Rhea" id="RHEA:24020"/>
        <dbReference type="ChEBI" id="CHEBI:29806"/>
        <dbReference type="ChEBI" id="CHEBI:32682"/>
        <dbReference type="ChEBI" id="CHEBI:57472"/>
        <dbReference type="EC" id="4.3.2.1"/>
    </reaction>
</comment>
<comment type="pathway">
    <text evidence="1">Amino-acid biosynthesis; L-arginine biosynthesis; L-arginine from L-ornithine and carbamoyl phosphate: step 3/3.</text>
</comment>
<comment type="subcellular location">
    <subcellularLocation>
        <location evidence="1">Cytoplasm</location>
    </subcellularLocation>
</comment>
<comment type="similarity">
    <text evidence="1">Belongs to the lyase 1 family. Argininosuccinate lyase subfamily.</text>
</comment>
<feature type="chain" id="PRO_1000000477" description="Argininosuccinate lyase">
    <location>
        <begin position="1"/>
        <end position="457"/>
    </location>
</feature>
<reference key="1">
    <citation type="journal article" date="2007" name="J. Bacteriol.">
        <title>The genome sequence of avian pathogenic Escherichia coli strain O1:K1:H7 shares strong similarities with human extraintestinal pathogenic E. coli genomes.</title>
        <authorList>
            <person name="Johnson T.J."/>
            <person name="Kariyawasam S."/>
            <person name="Wannemuehler Y."/>
            <person name="Mangiamele P."/>
            <person name="Johnson S.J."/>
            <person name="Doetkott C."/>
            <person name="Skyberg J.A."/>
            <person name="Lynne A.M."/>
            <person name="Johnson J.R."/>
            <person name="Nolan L.K."/>
        </authorList>
    </citation>
    <scope>NUCLEOTIDE SEQUENCE [LARGE SCALE GENOMIC DNA]</scope>
</reference>
<evidence type="ECO:0000255" key="1">
    <source>
        <dbReference type="HAMAP-Rule" id="MF_00006"/>
    </source>
</evidence>
<accession>A1AID8</accession>
<proteinExistence type="inferred from homology"/>
<sequence>MALWGGRFTQAADQRFKQFNDSLRFDYRLAEQDIVGSVAWSKALVTVGVLTAEEQAQLEEALNVLLEDVRARPQQILESDAEDIHSWVEGKLIDKVGQLGKKLHTGRSRNDQVATDLKLWCKDTVSELLTANRQLQSALVETAQNNQDAVMPGYTHLQRAQPVTFAHWCLAYVEMLARDESRLQDALKRLDVSPLGCGALAGTAYEIDREQLAGWLGFASATRNSLDSVSDRDHVLELLSAAAIGMVHLSRFAEDLIFFNTGEAGFVELSDRVTSGSSLMPQKKNPDALELIRGKCGRVQGALTGMMMTLKGLPLAYNKDMQEDKEGLFDALDTWLDCLHMAALVLDGIQVKRPRCQEAAQQGYANATELADYLVAKGVPFREAHHIVGEAVVEAIRQGKALEDLPLSELQKFSQVIGEDVYPILSLQSCLDKRAAKGGVSPQQVAQAIAFAQARLG</sequence>